<keyword id="KW-0007">Acetylation</keyword>
<keyword id="KW-0049">Antioxidant</keyword>
<keyword id="KW-0963">Cytoplasm</keyword>
<keyword id="KW-1015">Disulfide bond</keyword>
<keyword id="KW-0967">Endosome</keyword>
<keyword id="KW-0449">Lipoprotein</keyword>
<keyword id="KW-0496">Mitochondrion</keyword>
<keyword id="KW-0560">Oxidoreductase</keyword>
<keyword id="KW-0564">Palmitate</keyword>
<keyword id="KW-0575">Peroxidase</keyword>
<keyword id="KW-0597">Phosphoprotein</keyword>
<keyword id="KW-0676">Redox-active center</keyword>
<keyword id="KW-1185">Reference proteome</keyword>
<keyword id="KW-0809">Transit peptide</keyword>
<gene>
    <name type="primary">PRDX3</name>
</gene>
<protein>
    <recommendedName>
        <fullName>Thioredoxin-dependent peroxide reductase, mitochondrial</fullName>
        <ecNumber evidence="2">1.11.1.24</ecNumber>
    </recommendedName>
    <alternativeName>
        <fullName>Peroxiredoxin-3</fullName>
    </alternativeName>
    <alternativeName>
        <fullName evidence="5">Thioredoxin-dependent peroxiredoxin 3</fullName>
    </alternativeName>
</protein>
<feature type="transit peptide" description="Mitochondrion" evidence="2">
    <location>
        <begin position="1"/>
        <end position="61"/>
    </location>
</feature>
<feature type="chain" id="PRO_0000256858" description="Thioredoxin-dependent peroxide reductase, mitochondrial">
    <location>
        <begin position="62"/>
        <end position="256"/>
    </location>
</feature>
<feature type="domain" description="Thioredoxin" evidence="4">
    <location>
        <begin position="63"/>
        <end position="221"/>
    </location>
</feature>
<feature type="active site" description="Cysteine sulfenic acid (-SOH) intermediate" evidence="3">
    <location>
        <position position="108"/>
    </location>
</feature>
<feature type="modified residue" description="N6-succinyllysine" evidence="1">
    <location>
        <position position="83"/>
    </location>
</feature>
<feature type="modified residue" description="N6-acetyllysine; alternate" evidence="2">
    <location>
        <position position="91"/>
    </location>
</feature>
<feature type="modified residue" description="N6-succinyllysine; alternate" evidence="1">
    <location>
        <position position="91"/>
    </location>
</feature>
<feature type="modified residue" description="Phosphothreonine" evidence="2">
    <location>
        <position position="146"/>
    </location>
</feature>
<feature type="disulfide bond" description="Interchain (with C-229); in linked form" evidence="3">
    <location>
        <position position="108"/>
    </location>
</feature>
<feature type="disulfide bond" description="Interchain (with C-108); in linked form" evidence="3">
    <location>
        <position position="229"/>
    </location>
</feature>
<dbReference type="EC" id="1.11.1.24" evidence="2"/>
<dbReference type="EMBL" id="CR857380">
    <property type="protein sequence ID" value="CAH89674.1"/>
    <property type="molecule type" value="mRNA"/>
</dbReference>
<dbReference type="RefSeq" id="NP_001127184.1">
    <property type="nucleotide sequence ID" value="NM_001133712.2"/>
</dbReference>
<dbReference type="SMR" id="Q5REY3"/>
<dbReference type="FunCoup" id="Q5REY3">
    <property type="interactions" value="1190"/>
</dbReference>
<dbReference type="STRING" id="9601.ENSPPYP00000003152"/>
<dbReference type="PeroxiBase" id="4500">
    <property type="entry name" value="Pabe2CysPrx03"/>
</dbReference>
<dbReference type="Ensembl" id="ENSPPYT00000003258.3">
    <property type="protein sequence ID" value="ENSPPYP00000003152.2"/>
    <property type="gene ID" value="ENSPPYG00000002700.3"/>
</dbReference>
<dbReference type="GeneID" id="100174238"/>
<dbReference type="KEGG" id="pon:100174238"/>
<dbReference type="CTD" id="10935"/>
<dbReference type="eggNOG" id="KOG0852">
    <property type="taxonomic scope" value="Eukaryota"/>
</dbReference>
<dbReference type="GeneTree" id="ENSGT00940000153430"/>
<dbReference type="HOGENOM" id="CLU_042529_21_0_1"/>
<dbReference type="InParanoid" id="Q5REY3"/>
<dbReference type="OrthoDB" id="185659at2759"/>
<dbReference type="TreeFam" id="TF105181"/>
<dbReference type="Proteomes" id="UP000001595">
    <property type="component" value="Chromosome 10"/>
</dbReference>
<dbReference type="GO" id="GO:0005829">
    <property type="term" value="C:cytosol"/>
    <property type="evidence" value="ECO:0007669"/>
    <property type="project" value="TreeGrafter"/>
</dbReference>
<dbReference type="GO" id="GO:0005769">
    <property type="term" value="C:early endosome"/>
    <property type="evidence" value="ECO:0007669"/>
    <property type="project" value="UniProtKB-SubCell"/>
</dbReference>
<dbReference type="GO" id="GO:0005739">
    <property type="term" value="C:mitochondrion"/>
    <property type="evidence" value="ECO:0007669"/>
    <property type="project" value="UniProtKB-SubCell"/>
</dbReference>
<dbReference type="GO" id="GO:0008379">
    <property type="term" value="F:thioredoxin peroxidase activity"/>
    <property type="evidence" value="ECO:0007669"/>
    <property type="project" value="TreeGrafter"/>
</dbReference>
<dbReference type="GO" id="GO:0045454">
    <property type="term" value="P:cell redox homeostasis"/>
    <property type="evidence" value="ECO:0007669"/>
    <property type="project" value="TreeGrafter"/>
</dbReference>
<dbReference type="GO" id="GO:0033554">
    <property type="term" value="P:cellular response to stress"/>
    <property type="evidence" value="ECO:0007669"/>
    <property type="project" value="TreeGrafter"/>
</dbReference>
<dbReference type="GO" id="GO:0042744">
    <property type="term" value="P:hydrogen peroxide catabolic process"/>
    <property type="evidence" value="ECO:0007669"/>
    <property type="project" value="TreeGrafter"/>
</dbReference>
<dbReference type="GO" id="GO:0006979">
    <property type="term" value="P:response to oxidative stress"/>
    <property type="evidence" value="ECO:0007669"/>
    <property type="project" value="TreeGrafter"/>
</dbReference>
<dbReference type="CDD" id="cd03015">
    <property type="entry name" value="PRX_Typ2cys"/>
    <property type="match status" value="1"/>
</dbReference>
<dbReference type="FunFam" id="3.40.30.10:FF:000003">
    <property type="entry name" value="Peroxiredoxin 1"/>
    <property type="match status" value="1"/>
</dbReference>
<dbReference type="Gene3D" id="3.40.30.10">
    <property type="entry name" value="Glutaredoxin"/>
    <property type="match status" value="1"/>
</dbReference>
<dbReference type="InterPro" id="IPR000866">
    <property type="entry name" value="AhpC/TSA"/>
</dbReference>
<dbReference type="InterPro" id="IPR050217">
    <property type="entry name" value="Peroxiredoxin"/>
</dbReference>
<dbReference type="InterPro" id="IPR019479">
    <property type="entry name" value="Peroxiredoxin_C"/>
</dbReference>
<dbReference type="InterPro" id="IPR036249">
    <property type="entry name" value="Thioredoxin-like_sf"/>
</dbReference>
<dbReference type="InterPro" id="IPR013766">
    <property type="entry name" value="Thioredoxin_domain"/>
</dbReference>
<dbReference type="PANTHER" id="PTHR10681">
    <property type="entry name" value="THIOREDOXIN PEROXIDASE"/>
    <property type="match status" value="1"/>
</dbReference>
<dbReference type="PANTHER" id="PTHR10681:SF128">
    <property type="entry name" value="THIOREDOXIN-DEPENDENT PEROXIDE REDUCTASE, MITOCHONDRIAL"/>
    <property type="match status" value="1"/>
</dbReference>
<dbReference type="Pfam" id="PF10417">
    <property type="entry name" value="1-cysPrx_C"/>
    <property type="match status" value="1"/>
</dbReference>
<dbReference type="Pfam" id="PF00578">
    <property type="entry name" value="AhpC-TSA"/>
    <property type="match status" value="1"/>
</dbReference>
<dbReference type="SUPFAM" id="SSF52833">
    <property type="entry name" value="Thioredoxin-like"/>
    <property type="match status" value="1"/>
</dbReference>
<dbReference type="PROSITE" id="PS51352">
    <property type="entry name" value="THIOREDOXIN_2"/>
    <property type="match status" value="1"/>
</dbReference>
<organism>
    <name type="scientific">Pongo abelii</name>
    <name type="common">Sumatran orangutan</name>
    <name type="synonym">Pongo pygmaeus abelii</name>
    <dbReference type="NCBI Taxonomy" id="9601"/>
    <lineage>
        <taxon>Eukaryota</taxon>
        <taxon>Metazoa</taxon>
        <taxon>Chordata</taxon>
        <taxon>Craniata</taxon>
        <taxon>Vertebrata</taxon>
        <taxon>Euteleostomi</taxon>
        <taxon>Mammalia</taxon>
        <taxon>Eutheria</taxon>
        <taxon>Euarchontoglires</taxon>
        <taxon>Primates</taxon>
        <taxon>Haplorrhini</taxon>
        <taxon>Catarrhini</taxon>
        <taxon>Hominidae</taxon>
        <taxon>Pongo</taxon>
    </lineage>
</organism>
<proteinExistence type="evidence at transcript level"/>
<comment type="function">
    <text evidence="1 2">Thiol-specific peroxidase that catalyzes the reduction of hydrogen peroxide and organic hydroperoxides to water and alcohols, respectively. Plays a role in cell protection against oxidative stress by detoxifying peroxides. Acts synergistically with MAP3K13 to regulate the activation of NF-kappa-B in the cytosol (By similarity). Required for the maintenance of physical strength (By similarity).</text>
</comment>
<comment type="catalytic activity">
    <reaction evidence="2">
        <text>a hydroperoxide + [thioredoxin]-dithiol = an alcohol + [thioredoxin]-disulfide + H2O</text>
        <dbReference type="Rhea" id="RHEA:62620"/>
        <dbReference type="Rhea" id="RHEA-COMP:10698"/>
        <dbReference type="Rhea" id="RHEA-COMP:10700"/>
        <dbReference type="ChEBI" id="CHEBI:15377"/>
        <dbReference type="ChEBI" id="CHEBI:29950"/>
        <dbReference type="ChEBI" id="CHEBI:30879"/>
        <dbReference type="ChEBI" id="CHEBI:35924"/>
        <dbReference type="ChEBI" id="CHEBI:50058"/>
        <dbReference type="EC" id="1.11.1.24"/>
    </reaction>
</comment>
<comment type="subunit">
    <text evidence="2">Homodimer; disulfide-linked, upon oxidation. 6 homodimers assemble to form a ring-like dodecamer. Interacts with NEK6. Interacts with LRRK2. Interacts with MAP3K13 (By similarity). Interacts with RPS6KC1 (via PX domain).</text>
</comment>
<comment type="subcellular location">
    <subcellularLocation>
        <location evidence="3">Mitochondrion</location>
    </subcellularLocation>
    <subcellularLocation>
        <location evidence="2">Cytoplasm</location>
    </subcellularLocation>
    <subcellularLocation>
        <location evidence="2">Early endosome</location>
    </subcellularLocation>
    <text evidence="2">Localizes to early endosomes in a RPS6KC1-dependent manner.</text>
</comment>
<comment type="PTM">
    <text evidence="2">Phosphorylated by LRRK2; phosphorylation reduces perodixase activity.</text>
</comment>
<comment type="PTM">
    <text evidence="2">The enzyme can be inactivated by further oxidation of the cysteine sulfenic acid (C(P)-SOH) to sulphinic acid (C(P)-SO2H) and sulphonic acid (C(P)-SO3H) instead of its condensation to a disulfide bond.</text>
</comment>
<comment type="PTM">
    <text evidence="1">S-palmitoylated.</text>
</comment>
<comment type="miscellaneous">
    <text evidence="2">The active site is a conserved redox-active cysteine residue, the peroxidatic cysteine (C(P)), which makes the nucleophilic attack on the peroxide substrate. The peroxide oxidizes the C(P)-SH to cysteine sulfenic acid (C(P)-SOH), which then reacts with another cysteine residue, the resolving cysteine (C(R)), to form a disulfide bridge. The disulfide is subsequently reduced by an appropriate electron donor to complete the catalytic cycle. In this typical 2-Cys peroxiredoxin, C(R) is provided by the other dimeric subunit to form an intersubunit disulfide. The disulfide is subsequently reduced by thioredoxin.</text>
</comment>
<comment type="similarity">
    <text evidence="5">Belongs to the peroxiredoxin family. AhpC/Prx1 subfamily.</text>
</comment>
<sequence length="256" mass="27700">MAAAVGRLLRASVARGVSAIPWGISATAALRPAACGRTSLTNLLCSGSSQAKLFSTSSSYHAPAVTQHAPYFKGTAVVNGEFKDLSLDDFKGKYLVLFFYPLDFTFVCPTEIVAFSDKANEFHDVNCEVVAVSVDSHFSHLAWINTPRKNGGLGHMNIALLSDLTKQISRDYGVLLEGSGLALRGLFIIDPNGVIKHLSVNDLPVGRSVEETLRLVKAFQYVETHGEVCPANWTPDSPTIKPNPAASKEYFQKVNQ</sequence>
<evidence type="ECO:0000250" key="1">
    <source>
        <dbReference type="UniProtKB" id="P20108"/>
    </source>
</evidence>
<evidence type="ECO:0000250" key="2">
    <source>
        <dbReference type="UniProtKB" id="P30048"/>
    </source>
</evidence>
<evidence type="ECO:0000250" key="3">
    <source>
        <dbReference type="UniProtKB" id="P35705"/>
    </source>
</evidence>
<evidence type="ECO:0000255" key="4">
    <source>
        <dbReference type="PROSITE-ProRule" id="PRU00691"/>
    </source>
</evidence>
<evidence type="ECO:0000305" key="5"/>
<name>PRDX3_PONAB</name>
<reference key="1">
    <citation type="submission" date="2004-11" db="EMBL/GenBank/DDBJ databases">
        <authorList>
            <consortium name="The German cDNA consortium"/>
        </authorList>
    </citation>
    <scope>NUCLEOTIDE SEQUENCE [LARGE SCALE MRNA]</scope>
    <source>
        <tissue>Heart</tissue>
    </source>
</reference>
<accession>Q5REY3</accession>